<gene>
    <name evidence="1" type="primary">metXS</name>
    <name type="ordered locus">BMASAVP1_A2907</name>
</gene>
<organism>
    <name type="scientific">Burkholderia mallei (strain SAVP1)</name>
    <dbReference type="NCBI Taxonomy" id="320388"/>
    <lineage>
        <taxon>Bacteria</taxon>
        <taxon>Pseudomonadati</taxon>
        <taxon>Pseudomonadota</taxon>
        <taxon>Betaproteobacteria</taxon>
        <taxon>Burkholderiales</taxon>
        <taxon>Burkholderiaceae</taxon>
        <taxon>Burkholderia</taxon>
        <taxon>pseudomallei group</taxon>
    </lineage>
</organism>
<protein>
    <recommendedName>
        <fullName evidence="1">Homoserine O-succinyltransferase</fullName>
        <shortName evidence="1">HST</shortName>
        <ecNumber evidence="1">2.3.1.46</ecNumber>
    </recommendedName>
    <alternativeName>
        <fullName evidence="1">Homoserine transsuccinylase</fullName>
        <shortName evidence="1">HTS</shortName>
    </alternativeName>
</protein>
<feature type="chain" id="PRO_1000021872" description="Homoserine O-succinyltransferase">
    <location>
        <begin position="1"/>
        <end position="381"/>
    </location>
</feature>
<feature type="domain" description="AB hydrolase-1" evidence="1">
    <location>
        <begin position="45"/>
        <end position="360"/>
    </location>
</feature>
<feature type="active site" description="Nucleophile" evidence="1">
    <location>
        <position position="151"/>
    </location>
</feature>
<feature type="active site" evidence="1">
    <location>
        <position position="321"/>
    </location>
</feature>
<feature type="active site" evidence="1">
    <location>
        <position position="354"/>
    </location>
</feature>
<feature type="binding site" evidence="1">
    <location>
        <position position="221"/>
    </location>
    <ligand>
        <name>substrate</name>
    </ligand>
</feature>
<feature type="binding site" evidence="1">
    <location>
        <position position="355"/>
    </location>
    <ligand>
        <name>substrate</name>
    </ligand>
</feature>
<feature type="site" description="Important for acyl-CoA specificity" evidence="1">
    <location>
        <position position="323"/>
    </location>
</feature>
<sequence>MESIGVVAPHTMHFAEPLRLQSGSVLGNYQLVVETYGELNAARSNAVLVCHALNASHHVAGVYADDPRSTGWWDNMVGPGKPLDTNRFFVIGVNNLGSCFGSTGPMSIDPATGTPYGARFPVVTVEDWVHAQARVADAFGIERFAAVMGGSLGGMQALAWSLLYPERVAHCIDIASTPKLSAQNIAFNEVARSAILSDPDFHGGDYYAHGVKPRRGLRVARMIGHITYLSDDDMAEKFGRALRRADGALDAYNFNFDVEFEVESYLRYQGDKFADYFDANTYLLITRALDYFDPAKAFNGDLSAALAHTKAKYLIASFMTDWRFAPARSREIVKALLDNRRSVSYAEIDAPHGHDAFLLDDARYHNLVRAYYERIAEEVGA</sequence>
<name>METXS_BURMS</name>
<dbReference type="EC" id="2.3.1.46" evidence="1"/>
<dbReference type="EMBL" id="CP000526">
    <property type="protein sequence ID" value="ABM49692.1"/>
    <property type="molecule type" value="Genomic_DNA"/>
</dbReference>
<dbReference type="SMR" id="A1V7J8"/>
<dbReference type="ESTHER" id="burma-metx">
    <property type="family name" value="Homoserine_transacetylase"/>
</dbReference>
<dbReference type="KEGG" id="bmv:BMASAVP1_A2907"/>
<dbReference type="HOGENOM" id="CLU_028760_1_2_4"/>
<dbReference type="UniPathway" id="UPA00051">
    <property type="reaction ID" value="UER00075"/>
</dbReference>
<dbReference type="GO" id="GO:0005737">
    <property type="term" value="C:cytoplasm"/>
    <property type="evidence" value="ECO:0007669"/>
    <property type="project" value="UniProtKB-SubCell"/>
</dbReference>
<dbReference type="GO" id="GO:0004414">
    <property type="term" value="F:homoserine O-acetyltransferase activity"/>
    <property type="evidence" value="ECO:0007669"/>
    <property type="project" value="TreeGrafter"/>
</dbReference>
<dbReference type="GO" id="GO:0008899">
    <property type="term" value="F:homoserine O-succinyltransferase activity"/>
    <property type="evidence" value="ECO:0007669"/>
    <property type="project" value="UniProtKB-UniRule"/>
</dbReference>
<dbReference type="GO" id="GO:0009092">
    <property type="term" value="P:homoserine metabolic process"/>
    <property type="evidence" value="ECO:0007669"/>
    <property type="project" value="TreeGrafter"/>
</dbReference>
<dbReference type="GO" id="GO:0009086">
    <property type="term" value="P:methionine biosynthetic process"/>
    <property type="evidence" value="ECO:0007669"/>
    <property type="project" value="UniProtKB-UniRule"/>
</dbReference>
<dbReference type="FunFam" id="1.10.1740.110:FF:000001">
    <property type="entry name" value="Homoserine O-acetyltransferase"/>
    <property type="match status" value="1"/>
</dbReference>
<dbReference type="Gene3D" id="1.10.1740.110">
    <property type="match status" value="1"/>
</dbReference>
<dbReference type="Gene3D" id="3.40.50.1820">
    <property type="entry name" value="alpha/beta hydrolase"/>
    <property type="match status" value="1"/>
</dbReference>
<dbReference type="HAMAP" id="MF_00296">
    <property type="entry name" value="MetX_acyltransf"/>
    <property type="match status" value="1"/>
</dbReference>
<dbReference type="InterPro" id="IPR000073">
    <property type="entry name" value="AB_hydrolase_1"/>
</dbReference>
<dbReference type="InterPro" id="IPR029058">
    <property type="entry name" value="AB_hydrolase_fold"/>
</dbReference>
<dbReference type="InterPro" id="IPR008220">
    <property type="entry name" value="HAT_MetX-like"/>
</dbReference>
<dbReference type="NCBIfam" id="TIGR01392">
    <property type="entry name" value="homoserO_Ac_trn"/>
    <property type="match status" value="1"/>
</dbReference>
<dbReference type="NCBIfam" id="NF001209">
    <property type="entry name" value="PRK00175.1"/>
    <property type="match status" value="1"/>
</dbReference>
<dbReference type="PANTHER" id="PTHR32268">
    <property type="entry name" value="HOMOSERINE O-ACETYLTRANSFERASE"/>
    <property type="match status" value="1"/>
</dbReference>
<dbReference type="PANTHER" id="PTHR32268:SF11">
    <property type="entry name" value="HOMOSERINE O-ACETYLTRANSFERASE"/>
    <property type="match status" value="1"/>
</dbReference>
<dbReference type="Pfam" id="PF00561">
    <property type="entry name" value="Abhydrolase_1"/>
    <property type="match status" value="1"/>
</dbReference>
<dbReference type="PIRSF" id="PIRSF000443">
    <property type="entry name" value="Homoser_Ac_trans"/>
    <property type="match status" value="1"/>
</dbReference>
<dbReference type="SUPFAM" id="SSF53474">
    <property type="entry name" value="alpha/beta-Hydrolases"/>
    <property type="match status" value="1"/>
</dbReference>
<comment type="function">
    <text evidence="1">Transfers a succinyl group from succinyl-CoA to L-homoserine, forming succinyl-L-homoserine.</text>
</comment>
<comment type="catalytic activity">
    <reaction evidence="1">
        <text>L-homoserine + succinyl-CoA = O-succinyl-L-homoserine + CoA</text>
        <dbReference type="Rhea" id="RHEA:22008"/>
        <dbReference type="ChEBI" id="CHEBI:57287"/>
        <dbReference type="ChEBI" id="CHEBI:57292"/>
        <dbReference type="ChEBI" id="CHEBI:57476"/>
        <dbReference type="ChEBI" id="CHEBI:57661"/>
        <dbReference type="EC" id="2.3.1.46"/>
    </reaction>
</comment>
<comment type="pathway">
    <text evidence="1">Amino-acid biosynthesis; L-methionine biosynthesis via de novo pathway; O-succinyl-L-homoserine from L-homoserine: step 1/1.</text>
</comment>
<comment type="subunit">
    <text evidence="1">Homodimer.</text>
</comment>
<comment type="subcellular location">
    <subcellularLocation>
        <location evidence="1">Cytoplasm</location>
    </subcellularLocation>
</comment>
<comment type="similarity">
    <text evidence="1">Belongs to the AB hydrolase superfamily. MetX family.</text>
</comment>
<proteinExistence type="inferred from homology"/>
<reference key="1">
    <citation type="journal article" date="2010" name="Genome Biol. Evol.">
        <title>Continuing evolution of Burkholderia mallei through genome reduction and large-scale rearrangements.</title>
        <authorList>
            <person name="Losada L."/>
            <person name="Ronning C.M."/>
            <person name="DeShazer D."/>
            <person name="Woods D."/>
            <person name="Fedorova N."/>
            <person name="Kim H.S."/>
            <person name="Shabalina S.A."/>
            <person name="Pearson T.R."/>
            <person name="Brinkac L."/>
            <person name="Tan P."/>
            <person name="Nandi T."/>
            <person name="Crabtree J."/>
            <person name="Badger J."/>
            <person name="Beckstrom-Sternberg S."/>
            <person name="Saqib M."/>
            <person name="Schutzer S.E."/>
            <person name="Keim P."/>
            <person name="Nierman W.C."/>
        </authorList>
    </citation>
    <scope>NUCLEOTIDE SEQUENCE [LARGE SCALE GENOMIC DNA]</scope>
    <source>
        <strain>SAVP1</strain>
    </source>
</reference>
<accession>A1V7J8</accession>
<evidence type="ECO:0000255" key="1">
    <source>
        <dbReference type="HAMAP-Rule" id="MF_00296"/>
    </source>
</evidence>
<keyword id="KW-0012">Acyltransferase</keyword>
<keyword id="KW-0028">Amino-acid biosynthesis</keyword>
<keyword id="KW-0963">Cytoplasm</keyword>
<keyword id="KW-0486">Methionine biosynthesis</keyword>
<keyword id="KW-0808">Transferase</keyword>